<comment type="function">
    <text>Involved in the transposition of the insertion sequence IS3.</text>
</comment>
<comment type="similarity">
    <text evidence="2">Belongs to the transposase IS3/IS150/IS904 family.</text>
</comment>
<feature type="chain" id="PRO_0000394038" description="Transposase InsF for insertion sequence IS3fA">
    <location>
        <begin position="1"/>
        <end position="288"/>
    </location>
</feature>
<feature type="domain" description="Integrase catalytic" evidence="1">
    <location>
        <begin position="124"/>
        <end position="287"/>
    </location>
</feature>
<organism>
    <name type="scientific">Escherichia coli (strain K12)</name>
    <dbReference type="NCBI Taxonomy" id="83333"/>
    <lineage>
        <taxon>Bacteria</taxon>
        <taxon>Pseudomonadati</taxon>
        <taxon>Pseudomonadota</taxon>
        <taxon>Gammaproteobacteria</taxon>
        <taxon>Enterobacterales</taxon>
        <taxon>Enterobacteriaceae</taxon>
        <taxon>Escherichia</taxon>
    </lineage>
</organism>
<protein>
    <recommendedName>
        <fullName>Transposase InsF for insertion sequence IS3fA</fullName>
    </recommendedName>
</protein>
<gene>
    <name type="primary">insF6</name>
    <name type="synonym">yaaB</name>
    <name type="ordered locus">ECOK12F002</name>
</gene>
<name>INSF6_ECOLI</name>
<sequence length="288" mass="33540">MKYVFIEKHQAEFSIKAMCRVLRVARSGWYTWCQRRTRISTRQQFRQHCDSVVLAAFTRSKQRYGAPRLTDELRAQGYPFNVKTVAASLRRQGLRAKASRKFSPVSYRAHGLPVSENLLEQDFYASGPNQKWAGDITYLRTDEGWLYLAVVIDLWSRAVIGWSMSPRMTAQLACDALQMALWRRKRPRNVIVHTDRGGQYCSADYQAQLKRHNLRGSMSAKGCCYDNACVESFFHSLKVECIHGEHFISREIMRATVFNYIECDYNRWRRHSWCGGLSPEQFENKNLA</sequence>
<accession>P0CF84</accession>
<accession>O08009</accession>
<accession>O08012</accession>
<accession>O08304</accession>
<accession>P05822</accession>
<accession>P77673</accession>
<accession>Q2MBI8</accession>
<reference key="1">
    <citation type="submission" date="2000-04" db="EMBL/GenBank/DDBJ databases">
        <title>Complete nucleotide sequence of the F plasmid: its implications for organization and diversification of plasmid genomes.</title>
        <authorList>
            <person name="Shimizu H."/>
            <person name="Saitoh Y."/>
            <person name="Suda Y."/>
            <person name="Uehara K."/>
            <person name="Sampei G."/>
            <person name="Mizobuchi K."/>
        </authorList>
    </citation>
    <scope>NUCLEOTIDE SEQUENCE [LARGE SCALE GENOMIC DNA]</scope>
    <source>
        <strain>K12 / CR63</strain>
        <plasmid>F</plasmid>
    </source>
</reference>
<dbReference type="EMBL" id="AP001918">
    <property type="protein sequence ID" value="BAA97872.1"/>
    <property type="molecule type" value="Genomic_DNA"/>
</dbReference>
<dbReference type="RefSeq" id="NP_061381.1">
    <property type="nucleotide sequence ID" value="NC_002483.1"/>
</dbReference>
<dbReference type="SMR" id="P0CF84"/>
<dbReference type="KEGG" id="ecoc:C3026_01470"/>
<dbReference type="KEGG" id="ecoc:C3026_02660"/>
<dbReference type="KEGG" id="ecoc:C3026_06250"/>
<dbReference type="KEGG" id="ecoc:C3026_11730"/>
<dbReference type="KEGG" id="ecoc:C3026_24100"/>
<dbReference type="KEGG" id="ecoc:C3026_24645"/>
<dbReference type="PATRIC" id="fig|1411691.4.peg.161"/>
<dbReference type="OMA" id="DNARCES"/>
<dbReference type="PhylomeDB" id="P0CF84"/>
<dbReference type="PRO" id="PR:P0CF84"/>
<dbReference type="GO" id="GO:0003677">
    <property type="term" value="F:DNA binding"/>
    <property type="evidence" value="ECO:0007669"/>
    <property type="project" value="UniProtKB-KW"/>
</dbReference>
<dbReference type="GO" id="GO:0015074">
    <property type="term" value="P:DNA integration"/>
    <property type="evidence" value="ECO:0007669"/>
    <property type="project" value="InterPro"/>
</dbReference>
<dbReference type="GO" id="GO:0006310">
    <property type="term" value="P:DNA recombination"/>
    <property type="evidence" value="ECO:0007669"/>
    <property type="project" value="UniProtKB-KW"/>
</dbReference>
<dbReference type="GO" id="GO:0032196">
    <property type="term" value="P:transposition"/>
    <property type="evidence" value="ECO:0007669"/>
    <property type="project" value="UniProtKB-KW"/>
</dbReference>
<dbReference type="FunFam" id="3.30.420.10:FF:000030">
    <property type="entry name" value="IS3, transposase orfB"/>
    <property type="match status" value="1"/>
</dbReference>
<dbReference type="Gene3D" id="3.30.420.10">
    <property type="entry name" value="Ribonuclease H-like superfamily/Ribonuclease H"/>
    <property type="match status" value="1"/>
</dbReference>
<dbReference type="InterPro" id="IPR025948">
    <property type="entry name" value="HTH-like_dom"/>
</dbReference>
<dbReference type="InterPro" id="IPR001584">
    <property type="entry name" value="Integrase_cat-core"/>
</dbReference>
<dbReference type="InterPro" id="IPR012337">
    <property type="entry name" value="RNaseH-like_sf"/>
</dbReference>
<dbReference type="InterPro" id="IPR036397">
    <property type="entry name" value="RNaseH_sf"/>
</dbReference>
<dbReference type="InterPro" id="IPR048020">
    <property type="entry name" value="Transpos_IS3"/>
</dbReference>
<dbReference type="InterPro" id="IPR050900">
    <property type="entry name" value="Transposase_IS3/IS150/IS904"/>
</dbReference>
<dbReference type="NCBIfam" id="NF033516">
    <property type="entry name" value="transpos_IS3"/>
    <property type="match status" value="1"/>
</dbReference>
<dbReference type="PANTHER" id="PTHR46889:SF6">
    <property type="entry name" value="TRANSPOSASE INSF FOR INSERTION SEQUENCE IS3B"/>
    <property type="match status" value="1"/>
</dbReference>
<dbReference type="PANTHER" id="PTHR46889">
    <property type="entry name" value="TRANSPOSASE INSF FOR INSERTION SEQUENCE IS3B-RELATED"/>
    <property type="match status" value="1"/>
</dbReference>
<dbReference type="Pfam" id="PF13276">
    <property type="entry name" value="HTH_21"/>
    <property type="match status" value="1"/>
</dbReference>
<dbReference type="Pfam" id="PF00665">
    <property type="entry name" value="rve"/>
    <property type="match status" value="1"/>
</dbReference>
<dbReference type="Pfam" id="PF13333">
    <property type="entry name" value="rve_2"/>
    <property type="match status" value="1"/>
</dbReference>
<dbReference type="SUPFAM" id="SSF53098">
    <property type="entry name" value="Ribonuclease H-like"/>
    <property type="match status" value="1"/>
</dbReference>
<dbReference type="PROSITE" id="PS50994">
    <property type="entry name" value="INTEGRASE"/>
    <property type="match status" value="1"/>
</dbReference>
<keyword id="KW-0233">DNA recombination</keyword>
<keyword id="KW-0238">DNA-binding</keyword>
<keyword id="KW-0614">Plasmid</keyword>
<keyword id="KW-0814">Transposable element</keyword>
<keyword id="KW-0815">Transposition</keyword>
<proteinExistence type="inferred from homology"/>
<evidence type="ECO:0000255" key="1">
    <source>
        <dbReference type="PROSITE-ProRule" id="PRU00457"/>
    </source>
</evidence>
<evidence type="ECO:0000305" key="2"/>
<geneLocation type="plasmid">
    <name>F</name>
</geneLocation>